<evidence type="ECO:0000256" key="1">
    <source>
        <dbReference type="SAM" id="MobiDB-lite"/>
    </source>
</evidence>
<evidence type="ECO:0000269" key="2">
    <source>
    </source>
</evidence>
<evidence type="ECO:0000303" key="3">
    <source>
    </source>
</evidence>
<evidence type="ECO:0000305" key="4"/>
<evidence type="ECO:0000312" key="5">
    <source>
        <dbReference type="Araport" id="AT2G31305"/>
    </source>
</evidence>
<feature type="chain" id="PRO_0000442228" description="Protein phosphatase 1 regulatory subunit INH3">
    <location>
        <begin position="1"/>
        <end position="107"/>
    </location>
</feature>
<feature type="region of interest" description="Disordered" evidence="1">
    <location>
        <begin position="1"/>
        <end position="40"/>
    </location>
</feature>
<feature type="region of interest" description="Disordered" evidence="1">
    <location>
        <begin position="69"/>
        <end position="107"/>
    </location>
</feature>
<feature type="compositionally biased region" description="Low complexity" evidence="1">
    <location>
        <begin position="1"/>
        <end position="14"/>
    </location>
</feature>
<feature type="compositionally biased region" description="Acidic residues" evidence="1">
    <location>
        <begin position="71"/>
        <end position="80"/>
    </location>
</feature>
<feature type="compositionally biased region" description="Basic and acidic residues" evidence="1">
    <location>
        <begin position="81"/>
        <end position="94"/>
    </location>
</feature>
<feature type="compositionally biased region" description="Low complexity" evidence="1">
    <location>
        <begin position="95"/>
        <end position="107"/>
    </location>
</feature>
<feature type="mutagenesis site" description="Loss of binding to protein-phosphatase 1 (PP1)." evidence="2">
    <original>W</original>
    <variation>A</variation>
    <location>
        <position position="43"/>
    </location>
</feature>
<accession>Q8S8F7</accession>
<protein>
    <recommendedName>
        <fullName evidence="4">Protein phosphatase 1 regulatory subunit INH3</fullName>
    </recommendedName>
    <alternativeName>
        <fullName evidence="3">Protein INHIBITOR-3</fullName>
        <shortName evidence="3">AtINH3</shortName>
    </alternativeName>
</protein>
<reference key="1">
    <citation type="journal article" date="1999" name="Nature">
        <title>Sequence and analysis of chromosome 2 of the plant Arabidopsis thaliana.</title>
        <authorList>
            <person name="Lin X."/>
            <person name="Kaul S."/>
            <person name="Rounsley S.D."/>
            <person name="Shea T.P."/>
            <person name="Benito M.-I."/>
            <person name="Town C.D."/>
            <person name="Fujii C.Y."/>
            <person name="Mason T.M."/>
            <person name="Bowman C.L."/>
            <person name="Barnstead M.E."/>
            <person name="Feldblyum T.V."/>
            <person name="Buell C.R."/>
            <person name="Ketchum K.A."/>
            <person name="Lee J.J."/>
            <person name="Ronning C.M."/>
            <person name="Koo H.L."/>
            <person name="Moffat K.S."/>
            <person name="Cronin L.A."/>
            <person name="Shen M."/>
            <person name="Pai G."/>
            <person name="Van Aken S."/>
            <person name="Umayam L."/>
            <person name="Tallon L.J."/>
            <person name="Gill J.E."/>
            <person name="Adams M.D."/>
            <person name="Carrera A.J."/>
            <person name="Creasy T.H."/>
            <person name="Goodman H.M."/>
            <person name="Somerville C.R."/>
            <person name="Copenhaver G.P."/>
            <person name="Preuss D."/>
            <person name="Nierman W.C."/>
            <person name="White O."/>
            <person name="Eisen J.A."/>
            <person name="Salzberg S.L."/>
            <person name="Fraser C.M."/>
            <person name="Venter J.C."/>
        </authorList>
    </citation>
    <scope>NUCLEOTIDE SEQUENCE [LARGE SCALE GENOMIC DNA]</scope>
    <source>
        <strain>cv. Columbia</strain>
    </source>
</reference>
<reference key="2">
    <citation type="journal article" date="2017" name="Plant J.">
        <title>Araport11: a complete reannotation of the Arabidopsis thaliana reference genome.</title>
        <authorList>
            <person name="Cheng C.Y."/>
            <person name="Krishnakumar V."/>
            <person name="Chan A.P."/>
            <person name="Thibaud-Nissen F."/>
            <person name="Schobel S."/>
            <person name="Town C.D."/>
        </authorList>
    </citation>
    <scope>GENOME REANNOTATION</scope>
    <source>
        <strain>cv. Columbia</strain>
    </source>
</reference>
<reference key="3">
    <citation type="submission" date="2006-06" db="EMBL/GenBank/DDBJ databases">
        <title>Arabidopsis ORF clones.</title>
        <authorList>
            <person name="Quinitio C."/>
            <person name="Chen H."/>
            <person name="Kim C.J."/>
            <person name="Shinn P."/>
            <person name="Ecker J.R."/>
        </authorList>
    </citation>
    <scope>NUCLEOTIDE SEQUENCE [LARGE SCALE MRNA]</scope>
    <source>
        <strain>cv. Columbia</strain>
    </source>
</reference>
<reference key="4">
    <citation type="submission" date="2002-03" db="EMBL/GenBank/DDBJ databases">
        <title>Full-length cDNA from Arabidopsis thaliana.</title>
        <authorList>
            <person name="Brover V.V."/>
            <person name="Troukhan M.E."/>
            <person name="Alexandrov N.A."/>
            <person name="Lu Y.-P."/>
            <person name="Flavell R.B."/>
            <person name="Feldmann K.A."/>
        </authorList>
    </citation>
    <scope>NUCLEOTIDE SEQUENCE [LARGE SCALE MRNA]</scope>
</reference>
<reference key="5">
    <citation type="journal article" date="2009" name="Plant Physiol.">
        <title>Identification and functional characterization of inhibitor-3, a regulatory subunit of protein phosphatase 1 in plants.</title>
        <authorList>
            <person name="Takemiya A."/>
            <person name="Ariyoshi C."/>
            <person name="Shimazaki K."/>
        </authorList>
    </citation>
    <scope>FUNCTION</scope>
    <scope>INTERACTION WITH PROTEIN PHOSPHATASE 1</scope>
    <scope>SUBCELLULAR LOCATION</scope>
    <scope>TISSUE SPECIFICITY</scope>
    <scope>DISRUPTION PHENOTYPE</scope>
    <scope>MUTAGENESIS OF TRP-43</scope>
</reference>
<sequence length="107" mass="12104">MSTATRPSSSATTSVILENPVSQSQPTERLVLRLNRKKKKVSWKDGTVDNEFMQKKSSKKCCIFHKQKPFDEDDSEEEDDNNHHCDHNHEHSESGEASSSNDSKAVD</sequence>
<name>INH3_ARATH</name>
<dbReference type="EMBL" id="AC006593">
    <property type="protein sequence ID" value="AAM15305.1"/>
    <property type="molecule type" value="Genomic_DNA"/>
</dbReference>
<dbReference type="EMBL" id="CP002685">
    <property type="protein sequence ID" value="AEC08525.1"/>
    <property type="molecule type" value="Genomic_DNA"/>
</dbReference>
<dbReference type="EMBL" id="BT025702">
    <property type="protein sequence ID" value="ABF82605.1"/>
    <property type="molecule type" value="mRNA"/>
</dbReference>
<dbReference type="EMBL" id="AY086700">
    <property type="protein sequence ID" value="AAM63754.1"/>
    <property type="molecule type" value="mRNA"/>
</dbReference>
<dbReference type="RefSeq" id="NP_565720.1">
    <property type="nucleotide sequence ID" value="NM_128687.2"/>
</dbReference>
<dbReference type="SMR" id="Q8S8F7"/>
<dbReference type="FunCoup" id="Q8S8F7">
    <property type="interactions" value="11"/>
</dbReference>
<dbReference type="STRING" id="3702.Q8S8F7"/>
<dbReference type="PaxDb" id="3702-AT2G31305.1"/>
<dbReference type="ProteomicsDB" id="228851"/>
<dbReference type="EnsemblPlants" id="AT2G31305.1">
    <property type="protein sequence ID" value="AT2G31305.1"/>
    <property type="gene ID" value="AT2G31305"/>
</dbReference>
<dbReference type="GeneID" id="817688"/>
<dbReference type="Gramene" id="AT2G31305.1">
    <property type="protein sequence ID" value="AT2G31305.1"/>
    <property type="gene ID" value="AT2G31305"/>
</dbReference>
<dbReference type="KEGG" id="ath:AT2G31305"/>
<dbReference type="Araport" id="AT2G31305"/>
<dbReference type="TAIR" id="AT2G31305">
    <property type="gene designation" value="INH3"/>
</dbReference>
<dbReference type="eggNOG" id="KOG4102">
    <property type="taxonomic scope" value="Eukaryota"/>
</dbReference>
<dbReference type="HOGENOM" id="CLU_098333_4_2_1"/>
<dbReference type="InParanoid" id="Q8S8F7"/>
<dbReference type="OMA" id="MSHMHSS"/>
<dbReference type="PhylomeDB" id="Q8S8F7"/>
<dbReference type="PRO" id="PR:Q8S8F7"/>
<dbReference type="Proteomes" id="UP000006548">
    <property type="component" value="Chromosome 2"/>
</dbReference>
<dbReference type="ExpressionAtlas" id="Q8S8F7">
    <property type="expression patterns" value="baseline and differential"/>
</dbReference>
<dbReference type="GO" id="GO:0000164">
    <property type="term" value="C:protein phosphatase type 1 complex"/>
    <property type="evidence" value="ECO:0000314"/>
    <property type="project" value="TAIR"/>
</dbReference>
<dbReference type="GO" id="GO:0004865">
    <property type="term" value="F:protein serine/threonine phosphatase inhibitor activity"/>
    <property type="evidence" value="ECO:0007669"/>
    <property type="project" value="InterPro"/>
</dbReference>
<dbReference type="GO" id="GO:0009793">
    <property type="term" value="P:embryo development ending in seed dormancy"/>
    <property type="evidence" value="ECO:0000315"/>
    <property type="project" value="TAIR"/>
</dbReference>
<dbReference type="InterPro" id="IPR011107">
    <property type="entry name" value="PPI_Ypi1"/>
</dbReference>
<dbReference type="PANTHER" id="PTHR20835:SF0">
    <property type="entry name" value="E3 UBIQUITIN-PROTEIN LIGASE PPP1R11"/>
    <property type="match status" value="1"/>
</dbReference>
<dbReference type="PANTHER" id="PTHR20835">
    <property type="entry name" value="E3 UBIQUITIN-PROTEIN LIGASE PPP1R11-RELATED"/>
    <property type="match status" value="1"/>
</dbReference>
<dbReference type="Pfam" id="PF07491">
    <property type="entry name" value="PPI_Ypi1"/>
    <property type="match status" value="1"/>
</dbReference>
<organism>
    <name type="scientific">Arabidopsis thaliana</name>
    <name type="common">Mouse-ear cress</name>
    <dbReference type="NCBI Taxonomy" id="3702"/>
    <lineage>
        <taxon>Eukaryota</taxon>
        <taxon>Viridiplantae</taxon>
        <taxon>Streptophyta</taxon>
        <taxon>Embryophyta</taxon>
        <taxon>Tracheophyta</taxon>
        <taxon>Spermatophyta</taxon>
        <taxon>Magnoliopsida</taxon>
        <taxon>eudicotyledons</taxon>
        <taxon>Gunneridae</taxon>
        <taxon>Pentapetalae</taxon>
        <taxon>rosids</taxon>
        <taxon>malvids</taxon>
        <taxon>Brassicales</taxon>
        <taxon>Brassicaceae</taxon>
        <taxon>Camelineae</taxon>
        <taxon>Arabidopsis</taxon>
    </lineage>
</organism>
<gene>
    <name evidence="3" type="primary">INH3</name>
    <name evidence="5" type="ordered locus">At2g31305</name>
</gene>
<proteinExistence type="evidence at protein level"/>
<comment type="function">
    <text evidence="2">Inhibitor of protein-phosphatase 1 (PP1). Binds to and inhibits PP1 activity. Required for early embryogenesis progression.</text>
</comment>
<comment type="subunit">
    <text evidence="2">Interacts with protein phosphatase 1.</text>
</comment>
<comment type="tissue specificity">
    <text evidence="2">Expressed in roots, cotyledons, leaves, flowers and embryos.</text>
</comment>
<comment type="disruption phenotype">
    <text evidence="2">Embryonic lethality due to embryo development arrest at globular stage.</text>
</comment>
<keyword id="KW-0650">Protein phosphatase inhibitor</keyword>
<keyword id="KW-1185">Reference proteome</keyword>